<evidence type="ECO:0000305" key="1"/>
<accession>P46761</accession>
<keyword id="KW-0496">Mitochondrion</keyword>
<keyword id="KW-0687">Ribonucleoprotein</keyword>
<keyword id="KW-0689">Ribosomal protein</keyword>
<gene>
    <name type="primary">RPS14</name>
</gene>
<reference key="1">
    <citation type="journal article" date="1995" name="J. Mol. Biol.">
        <title>The mitochondrial DNA of the amoeboid protozoon, Acanthamoeba castellanii: complete sequence, gene content and genome organization.</title>
        <authorList>
            <person name="Burger G."/>
            <person name="Plante I."/>
            <person name="Lonergan K.M."/>
            <person name="Gray M.W."/>
        </authorList>
    </citation>
    <scope>NUCLEOTIDE SEQUENCE [GENOMIC DNA]</scope>
    <source>
        <strain>ATCC 30010 / Neff</strain>
    </source>
</reference>
<sequence length="99" mass="12045">MKYLLIKNKKLYKLFFKFELKRLQYKSVMLNTRLPNYIRQKAFMYINKLDKNTSYVAIKQRCFLSNNGRSVLNHFKLSRIKLRLLISNNYVNGVKKFNK</sequence>
<geneLocation type="mitochondrion"/>
<name>RT14_ACACA</name>
<comment type="subcellular location">
    <subcellularLocation>
        <location>Mitochondrion</location>
    </subcellularLocation>
</comment>
<comment type="similarity">
    <text evidence="1">Belongs to the universal ribosomal protein uS14 family.</text>
</comment>
<proteinExistence type="inferred from homology"/>
<dbReference type="EMBL" id="U12386">
    <property type="protein sequence ID" value="AAD11845.1"/>
    <property type="molecule type" value="Genomic_DNA"/>
</dbReference>
<dbReference type="PIR" id="S53853">
    <property type="entry name" value="S53853"/>
</dbReference>
<dbReference type="RefSeq" id="NP_042552.1">
    <property type="nucleotide sequence ID" value="NC_001637.1"/>
</dbReference>
<dbReference type="SMR" id="P46761"/>
<dbReference type="GeneID" id="1734049"/>
<dbReference type="GO" id="GO:0005739">
    <property type="term" value="C:mitochondrion"/>
    <property type="evidence" value="ECO:0007669"/>
    <property type="project" value="UniProtKB-SubCell"/>
</dbReference>
<dbReference type="GO" id="GO:0015935">
    <property type="term" value="C:small ribosomal subunit"/>
    <property type="evidence" value="ECO:0007669"/>
    <property type="project" value="TreeGrafter"/>
</dbReference>
<dbReference type="GO" id="GO:0003735">
    <property type="term" value="F:structural constituent of ribosome"/>
    <property type="evidence" value="ECO:0007669"/>
    <property type="project" value="InterPro"/>
</dbReference>
<dbReference type="GO" id="GO:0006412">
    <property type="term" value="P:translation"/>
    <property type="evidence" value="ECO:0007669"/>
    <property type="project" value="InterPro"/>
</dbReference>
<dbReference type="Gene3D" id="1.10.287.1480">
    <property type="match status" value="1"/>
</dbReference>
<dbReference type="InterPro" id="IPR001209">
    <property type="entry name" value="Ribosomal_uS14"/>
</dbReference>
<dbReference type="InterPro" id="IPR018271">
    <property type="entry name" value="Ribosomal_uS14_CS"/>
</dbReference>
<dbReference type="PANTHER" id="PTHR19836">
    <property type="entry name" value="30S RIBOSOMAL PROTEIN S14"/>
    <property type="match status" value="1"/>
</dbReference>
<dbReference type="PANTHER" id="PTHR19836:SF30">
    <property type="entry name" value="RIBOSOMAL PROTEIN S14"/>
    <property type="match status" value="1"/>
</dbReference>
<dbReference type="Pfam" id="PF00253">
    <property type="entry name" value="Ribosomal_S14"/>
    <property type="match status" value="1"/>
</dbReference>
<dbReference type="SUPFAM" id="SSF57716">
    <property type="entry name" value="Glucocorticoid receptor-like (DNA-binding domain)"/>
    <property type="match status" value="1"/>
</dbReference>
<dbReference type="PROSITE" id="PS00527">
    <property type="entry name" value="RIBOSOMAL_S14"/>
    <property type="match status" value="1"/>
</dbReference>
<feature type="chain" id="PRO_0000131009" description="Small ribosomal subunit protein uS14m">
    <location>
        <begin position="1"/>
        <end position="99"/>
    </location>
</feature>
<protein>
    <recommendedName>
        <fullName evidence="1">Small ribosomal subunit protein uS14m</fullName>
    </recommendedName>
    <alternativeName>
        <fullName>Ribosomal protein S14, mitochondrial</fullName>
    </alternativeName>
</protein>
<organism>
    <name type="scientific">Acanthamoeba castellanii</name>
    <name type="common">Amoeba</name>
    <dbReference type="NCBI Taxonomy" id="5755"/>
    <lineage>
        <taxon>Eukaryota</taxon>
        <taxon>Amoebozoa</taxon>
        <taxon>Discosea</taxon>
        <taxon>Longamoebia</taxon>
        <taxon>Centramoebida</taxon>
        <taxon>Acanthamoebidae</taxon>
        <taxon>Acanthamoeba</taxon>
    </lineage>
</organism>